<gene>
    <name evidence="1" type="primary">mt-atp6</name>
    <name type="synonym">atp6</name>
    <name type="synonym">atpase6</name>
    <name type="synonym">mtatp6</name>
</gene>
<feature type="chain" id="PRO_0000082144" description="ATP synthase F(0) complex subunit a">
    <location>
        <begin position="1" status="less than"/>
        <end position="219"/>
    </location>
</feature>
<feature type="transmembrane region" description="Helical" evidence="2">
    <location>
        <begin position="4"/>
        <end position="24"/>
    </location>
</feature>
<feature type="transmembrane region" description="Helical" evidence="2">
    <location>
        <begin position="61"/>
        <end position="81"/>
    </location>
</feature>
<feature type="transmembrane region" description="Helical" evidence="2">
    <location>
        <begin position="90"/>
        <end position="110"/>
    </location>
</feature>
<feature type="transmembrane region" description="Helical" evidence="2">
    <location>
        <begin position="124"/>
        <end position="144"/>
    </location>
</feature>
<feature type="transmembrane region" description="Helical" evidence="2">
    <location>
        <begin position="172"/>
        <end position="192"/>
    </location>
</feature>
<feature type="transmembrane region" description="Helical" evidence="2">
    <location>
        <begin position="194"/>
        <end position="214"/>
    </location>
</feature>
<feature type="sequence variant" description="In subspecies Rhodurus.">
    <original>T</original>
    <variation>A</variation>
    <location>
        <position position="17"/>
    </location>
</feature>
<feature type="sequence variant" description="In subspecies Rhodurus.">
    <original>I</original>
    <variation>V</variation>
    <location>
        <position position="136"/>
    </location>
</feature>
<feature type="non-terminal residue">
    <location>
        <position position="1"/>
    </location>
</feature>
<reference key="1">
    <citation type="journal article" date="1996" name="Zool. Sci.">
        <title>Genetic relationship among three subspecies of Oncorhynchus masou determined by mitochondrial DNA sequence analysis.</title>
        <authorList>
            <person name="Oohara I."/>
            <person name="Okazaki T."/>
        </authorList>
    </citation>
    <scope>NUCLEOTIDE SEQUENCE [GENOMIC DNA]</scope>
</reference>
<sequence>FMSPTYLGIPLIAVALTLPWILFPTPSARWLNNRLITLQGWFINRFTQQLLLPLNLGGHKWAALLTSLMLFLITLNMLGLLPYTFTPTTQLSLNMGLAVPLWLATVIIGMRNQPTAALGHLLPEGTPVPLIPVLIIIETISLFIRPLALGVRLTANLTAGHLLIQLIATAAFVLLPLMPTVAILTSIVLFLLTLLEIAVAMIQAYVFVLLLSLYLQENV</sequence>
<proteinExistence type="inferred from homology"/>
<name>ATP6_ONCMA</name>
<keyword id="KW-0066">ATP synthesis</keyword>
<keyword id="KW-0138">CF(0)</keyword>
<keyword id="KW-0375">Hydrogen ion transport</keyword>
<keyword id="KW-0406">Ion transport</keyword>
<keyword id="KW-0472">Membrane</keyword>
<keyword id="KW-0496">Mitochondrion</keyword>
<keyword id="KW-0999">Mitochondrion inner membrane</keyword>
<keyword id="KW-0812">Transmembrane</keyword>
<keyword id="KW-1133">Transmembrane helix</keyword>
<keyword id="KW-0813">Transport</keyword>
<geneLocation type="mitochondrion"/>
<comment type="function">
    <text evidence="1">Subunit a, of the mitochondrial membrane ATP synthase complex (F(1)F(0) ATP synthase or Complex V) that produces ATP from ADP in the presence of a proton gradient across the membrane which is generated by electron transport complexes of the respiratory chain. ATP synthase complex consist of a soluble F(1) head domain - the catalytic core - and a membrane F(1) domain - the membrane proton channel. These two domains are linked by a central stalk rotating inside the F(1) region and a stationary peripheral stalk. During catalysis, ATP synthesis in the catalytic domain of F(1) is coupled via a rotary mechanism of the central stalk subunits to proton translocation. With the subunit c (ATP5MC1), forms the proton-conducting channel in the F(0) domain, that contains two crucial half-channels (inlet and outlet) that facilitate proton movement from the mitochondrial intermembrane space (IMS) into the matrix. Protons are taken up via the inlet half-channel and released through the outlet half-channel, following a Grotthuss mechanism.</text>
</comment>
<comment type="catalytic activity">
    <reaction evidence="1">
        <text>H(+)(in) = H(+)(out)</text>
        <dbReference type="Rhea" id="RHEA:34979"/>
        <dbReference type="ChEBI" id="CHEBI:15378"/>
    </reaction>
</comment>
<comment type="subunit">
    <text evidence="1">Component of the ATP synthase complex composed at least of ATP5F1A/subunit alpha, ATP5F1B/subunit beta, ATP5MC1/subunit c (homooctomer), MT-ATP6/subunit a, MT-ATP8/subunit 8, ATP5ME/subunit e, ATP5MF/subunit f, ATP5MG/subunit g, ATP5MK/subunit k, ATP5MJ/subunit j, ATP5F1C/subunit gamma, ATP5F1D/subunit delta, ATP5F1E/subunit epsilon, ATP5PF/subunit F6, ATP5PB/subunit b, ATP5PD/subunit d, ATP5PO/subunit OSCP. ATP synthase complex consists of a soluble F(1) head domain (subunits alpha(3) and beta(3)) - the catalytic core - and a membrane F(0) domain - the membrane proton channel (subunits c, a, 8, e, f, g, k and j). These two domains are linked by a central stalk (subunits gamma, delta, and epsilon) rotating inside the F1 region and a stationary peripheral stalk (subunits F6, b, d, and OSCP). Interacts with DNAJC30; interaction is direct.</text>
</comment>
<comment type="subcellular location">
    <subcellularLocation>
        <location>Mitochondrion inner membrane</location>
        <topology>Multi-pass membrane protein</topology>
    </subcellularLocation>
</comment>
<comment type="similarity">
    <text evidence="3">Belongs to the ATPase A chain family.</text>
</comment>
<protein>
    <recommendedName>
        <fullName evidence="1">ATP synthase F(0) complex subunit a</fullName>
    </recommendedName>
    <alternativeName>
        <fullName>F-ATPase protein 6</fullName>
    </alternativeName>
    <alternativeName>
        <fullName evidence="1">Proton-conducting channel, ATP synthase F(0) complex subunit a</fullName>
    </alternativeName>
</protein>
<evidence type="ECO:0000250" key="1">
    <source>
        <dbReference type="UniProtKB" id="P00846"/>
    </source>
</evidence>
<evidence type="ECO:0000255" key="2"/>
<evidence type="ECO:0000305" key="3"/>
<organism>
    <name type="scientific">Oncorhynchus masou</name>
    <name type="common">Cherry salmon</name>
    <name type="synonym">Masu salmon</name>
    <dbReference type="NCBI Taxonomy" id="8020"/>
    <lineage>
        <taxon>Eukaryota</taxon>
        <taxon>Metazoa</taxon>
        <taxon>Chordata</taxon>
        <taxon>Craniata</taxon>
        <taxon>Vertebrata</taxon>
        <taxon>Euteleostomi</taxon>
        <taxon>Actinopterygii</taxon>
        <taxon>Neopterygii</taxon>
        <taxon>Teleostei</taxon>
        <taxon>Protacanthopterygii</taxon>
        <taxon>Salmoniformes</taxon>
        <taxon>Salmonidae</taxon>
        <taxon>Salmoninae</taxon>
        <taxon>Oncorhynchus</taxon>
    </lineage>
</organism>
<dbReference type="EMBL" id="D63410">
    <property type="protein sequence ID" value="BAA09710.1"/>
    <property type="molecule type" value="Genomic_DNA"/>
</dbReference>
<dbReference type="EMBL" id="D63336">
    <property type="protein sequence ID" value="BAA09652.1"/>
    <property type="molecule type" value="Genomic_DNA"/>
</dbReference>
<dbReference type="EMBL" id="D63335">
    <property type="protein sequence ID" value="BAA09648.1"/>
    <property type="molecule type" value="Genomic_DNA"/>
</dbReference>
<dbReference type="SMR" id="Q36964"/>
<dbReference type="GO" id="GO:0005743">
    <property type="term" value="C:mitochondrial inner membrane"/>
    <property type="evidence" value="ECO:0007669"/>
    <property type="project" value="UniProtKB-SubCell"/>
</dbReference>
<dbReference type="GO" id="GO:0045259">
    <property type="term" value="C:proton-transporting ATP synthase complex"/>
    <property type="evidence" value="ECO:0000250"/>
    <property type="project" value="UniProtKB"/>
</dbReference>
<dbReference type="GO" id="GO:0015252">
    <property type="term" value="F:proton channel activity"/>
    <property type="evidence" value="ECO:0000250"/>
    <property type="project" value="UniProtKB"/>
</dbReference>
<dbReference type="GO" id="GO:0046933">
    <property type="term" value="F:proton-transporting ATP synthase activity, rotational mechanism"/>
    <property type="evidence" value="ECO:0007669"/>
    <property type="project" value="TreeGrafter"/>
</dbReference>
<dbReference type="GO" id="GO:0015986">
    <property type="term" value="P:proton motive force-driven ATP synthesis"/>
    <property type="evidence" value="ECO:0000250"/>
    <property type="project" value="UniProtKB"/>
</dbReference>
<dbReference type="GO" id="GO:1902600">
    <property type="term" value="P:proton transmembrane transport"/>
    <property type="evidence" value="ECO:0000250"/>
    <property type="project" value="UniProtKB"/>
</dbReference>
<dbReference type="CDD" id="cd00310">
    <property type="entry name" value="ATP-synt_Fo_a_6"/>
    <property type="match status" value="1"/>
</dbReference>
<dbReference type="FunFam" id="1.20.120.220:FF:000004">
    <property type="entry name" value="ATP synthase subunit a"/>
    <property type="match status" value="1"/>
</dbReference>
<dbReference type="Gene3D" id="1.20.120.220">
    <property type="entry name" value="ATP synthase, F0 complex, subunit A"/>
    <property type="match status" value="1"/>
</dbReference>
<dbReference type="InterPro" id="IPR000568">
    <property type="entry name" value="ATP_synth_F0_asu"/>
</dbReference>
<dbReference type="InterPro" id="IPR023011">
    <property type="entry name" value="ATP_synth_F0_asu_AS"/>
</dbReference>
<dbReference type="InterPro" id="IPR045083">
    <property type="entry name" value="ATP_synth_F0_asu_bact/mt"/>
</dbReference>
<dbReference type="InterPro" id="IPR035908">
    <property type="entry name" value="F0_ATP_A_sf"/>
</dbReference>
<dbReference type="NCBIfam" id="TIGR01131">
    <property type="entry name" value="ATP_synt_6_or_A"/>
    <property type="match status" value="1"/>
</dbReference>
<dbReference type="PANTHER" id="PTHR11410">
    <property type="entry name" value="ATP SYNTHASE SUBUNIT A"/>
    <property type="match status" value="1"/>
</dbReference>
<dbReference type="PANTHER" id="PTHR11410:SF0">
    <property type="entry name" value="ATP SYNTHASE SUBUNIT A"/>
    <property type="match status" value="1"/>
</dbReference>
<dbReference type="Pfam" id="PF00119">
    <property type="entry name" value="ATP-synt_A"/>
    <property type="match status" value="1"/>
</dbReference>
<dbReference type="PRINTS" id="PR00123">
    <property type="entry name" value="ATPASEA"/>
</dbReference>
<dbReference type="SUPFAM" id="SSF81336">
    <property type="entry name" value="F1F0 ATP synthase subunit A"/>
    <property type="match status" value="1"/>
</dbReference>
<dbReference type="PROSITE" id="PS00449">
    <property type="entry name" value="ATPASE_A"/>
    <property type="match status" value="1"/>
</dbReference>
<accession>Q36964</accession>
<accession>Q35268</accession>